<comment type="function">
    <text evidence="2">Transaldolase is important for the balance of metabolites in the pentose-phosphate pathway.</text>
</comment>
<comment type="catalytic activity">
    <reaction evidence="2">
        <text>D-sedoheptulose 7-phosphate + D-glyceraldehyde 3-phosphate = D-erythrose 4-phosphate + beta-D-fructose 6-phosphate</text>
        <dbReference type="Rhea" id="RHEA:17053"/>
        <dbReference type="ChEBI" id="CHEBI:16897"/>
        <dbReference type="ChEBI" id="CHEBI:57483"/>
        <dbReference type="ChEBI" id="CHEBI:57634"/>
        <dbReference type="ChEBI" id="CHEBI:59776"/>
        <dbReference type="EC" id="2.2.1.2"/>
    </reaction>
</comment>
<comment type="pathway">
    <text evidence="2">Carbohydrate degradation; pentose phosphate pathway; D-glyceraldehyde 3-phosphate and beta-D-fructose 6-phosphate from D-ribose 5-phosphate and D-xylulose 5-phosphate (non-oxidative stage): step 2/3.</text>
</comment>
<comment type="subunit">
    <text evidence="1">Homodimer.</text>
</comment>
<comment type="subcellular location">
    <subcellularLocation>
        <location evidence="2">Cytoplasm</location>
    </subcellularLocation>
</comment>
<comment type="similarity">
    <text evidence="2">Belongs to the transaldolase family. Type 1 subfamily.</text>
</comment>
<reference key="1">
    <citation type="journal article" date="2008" name="J. Bacteriol.">
        <title>Insights into plant cell wall degradation from the genome sequence of the soil bacterium Cellvibrio japonicus.</title>
        <authorList>
            <person name="DeBoy R.T."/>
            <person name="Mongodin E.F."/>
            <person name="Fouts D.E."/>
            <person name="Tailford L.E."/>
            <person name="Khouri H."/>
            <person name="Emerson J.B."/>
            <person name="Mohamoud Y."/>
            <person name="Watkins K."/>
            <person name="Henrissat B."/>
            <person name="Gilbert H.J."/>
            <person name="Nelson K.E."/>
        </authorList>
    </citation>
    <scope>NUCLEOTIDE SEQUENCE [LARGE SCALE GENOMIC DNA]</scope>
    <source>
        <strain>Ueda107</strain>
    </source>
</reference>
<name>TAL_CELJU</name>
<feature type="chain" id="PRO_1000126243" description="Transaldolase">
    <location>
        <begin position="1"/>
        <end position="318"/>
    </location>
</feature>
<feature type="active site" description="Schiff-base intermediate with substrate" evidence="2">
    <location>
        <position position="131"/>
    </location>
</feature>
<sequence length="318" mass="34866">MTSKLEQLKQFTDVVADTGDIEAIRLYKPLDATTNPSLVYKAAQMPQYQALLDTSINGAKSITNSAEQLSAASDNLAVGIGLEILKLVPGRISTEVDARLSFDTNASIAKARHLISLYEKGGVDKSRVLIKLASTWEGIRAAEILEKEGINCNLTLLFGFNQAAACADAGVFLISPFVGRILDWYKANTNKKEYAAEEDPGVVSVRRIYNYYKQHGYNTVVMGASFRNIGEIEALAGCDRLTISPQLLQELDQDKGELKRVLSPDNRGEAIAKLIDTEASFRFGLNQDAMATEKLAEGIRGFVKDQINLENLLKSRAQ</sequence>
<gene>
    <name evidence="2" type="primary">tal</name>
    <name type="ordered locus">CJA_1489</name>
</gene>
<accession>B3PDM9</accession>
<proteinExistence type="inferred from homology"/>
<evidence type="ECO:0000250" key="1"/>
<evidence type="ECO:0000255" key="2">
    <source>
        <dbReference type="HAMAP-Rule" id="MF_00492"/>
    </source>
</evidence>
<keyword id="KW-0963">Cytoplasm</keyword>
<keyword id="KW-0570">Pentose shunt</keyword>
<keyword id="KW-1185">Reference proteome</keyword>
<keyword id="KW-0704">Schiff base</keyword>
<keyword id="KW-0808">Transferase</keyword>
<dbReference type="EC" id="2.2.1.2" evidence="2"/>
<dbReference type="EMBL" id="CP000934">
    <property type="protein sequence ID" value="ACE85908.1"/>
    <property type="molecule type" value="Genomic_DNA"/>
</dbReference>
<dbReference type="RefSeq" id="WP_012487119.1">
    <property type="nucleotide sequence ID" value="NC_010995.1"/>
</dbReference>
<dbReference type="SMR" id="B3PDM9"/>
<dbReference type="STRING" id="498211.CJA_1489"/>
<dbReference type="KEGG" id="cja:CJA_1489"/>
<dbReference type="eggNOG" id="COG0176">
    <property type="taxonomic scope" value="Bacteria"/>
</dbReference>
<dbReference type="HOGENOM" id="CLU_047470_0_1_6"/>
<dbReference type="OrthoDB" id="9809101at2"/>
<dbReference type="UniPathway" id="UPA00115">
    <property type="reaction ID" value="UER00414"/>
</dbReference>
<dbReference type="Proteomes" id="UP000001036">
    <property type="component" value="Chromosome"/>
</dbReference>
<dbReference type="GO" id="GO:0005829">
    <property type="term" value="C:cytosol"/>
    <property type="evidence" value="ECO:0007669"/>
    <property type="project" value="TreeGrafter"/>
</dbReference>
<dbReference type="GO" id="GO:0004801">
    <property type="term" value="F:transaldolase activity"/>
    <property type="evidence" value="ECO:0000250"/>
    <property type="project" value="UniProtKB"/>
</dbReference>
<dbReference type="GO" id="GO:0005975">
    <property type="term" value="P:carbohydrate metabolic process"/>
    <property type="evidence" value="ECO:0007669"/>
    <property type="project" value="InterPro"/>
</dbReference>
<dbReference type="GO" id="GO:0006098">
    <property type="term" value="P:pentose-phosphate shunt"/>
    <property type="evidence" value="ECO:0007669"/>
    <property type="project" value="UniProtKB-UniRule"/>
</dbReference>
<dbReference type="CDD" id="cd00957">
    <property type="entry name" value="Transaldolase_TalAB"/>
    <property type="match status" value="1"/>
</dbReference>
<dbReference type="FunFam" id="3.20.20.70:FF:000002">
    <property type="entry name" value="Transaldolase"/>
    <property type="match status" value="1"/>
</dbReference>
<dbReference type="Gene3D" id="3.20.20.70">
    <property type="entry name" value="Aldolase class I"/>
    <property type="match status" value="1"/>
</dbReference>
<dbReference type="HAMAP" id="MF_00492">
    <property type="entry name" value="Transaldolase_1"/>
    <property type="match status" value="1"/>
</dbReference>
<dbReference type="InterPro" id="IPR013785">
    <property type="entry name" value="Aldolase_TIM"/>
</dbReference>
<dbReference type="InterPro" id="IPR001585">
    <property type="entry name" value="TAL/FSA"/>
</dbReference>
<dbReference type="InterPro" id="IPR004730">
    <property type="entry name" value="Transaldolase_1"/>
</dbReference>
<dbReference type="InterPro" id="IPR018225">
    <property type="entry name" value="Transaldolase_AS"/>
</dbReference>
<dbReference type="NCBIfam" id="NF009001">
    <property type="entry name" value="PRK12346.1"/>
    <property type="match status" value="1"/>
</dbReference>
<dbReference type="NCBIfam" id="TIGR00874">
    <property type="entry name" value="talAB"/>
    <property type="match status" value="1"/>
</dbReference>
<dbReference type="PANTHER" id="PTHR10683">
    <property type="entry name" value="TRANSALDOLASE"/>
    <property type="match status" value="1"/>
</dbReference>
<dbReference type="PANTHER" id="PTHR10683:SF18">
    <property type="entry name" value="TRANSALDOLASE"/>
    <property type="match status" value="1"/>
</dbReference>
<dbReference type="Pfam" id="PF00923">
    <property type="entry name" value="TAL_FSA"/>
    <property type="match status" value="1"/>
</dbReference>
<dbReference type="SUPFAM" id="SSF51569">
    <property type="entry name" value="Aldolase"/>
    <property type="match status" value="1"/>
</dbReference>
<dbReference type="PROSITE" id="PS01054">
    <property type="entry name" value="TRANSALDOLASE_1"/>
    <property type="match status" value="1"/>
</dbReference>
<dbReference type="PROSITE" id="PS00958">
    <property type="entry name" value="TRANSALDOLASE_2"/>
    <property type="match status" value="1"/>
</dbReference>
<organism>
    <name type="scientific">Cellvibrio japonicus (strain Ueda107)</name>
    <name type="common">Pseudomonas fluorescens subsp. cellulosa</name>
    <dbReference type="NCBI Taxonomy" id="498211"/>
    <lineage>
        <taxon>Bacteria</taxon>
        <taxon>Pseudomonadati</taxon>
        <taxon>Pseudomonadota</taxon>
        <taxon>Gammaproteobacteria</taxon>
        <taxon>Cellvibrionales</taxon>
        <taxon>Cellvibrionaceae</taxon>
        <taxon>Cellvibrio</taxon>
    </lineage>
</organism>
<protein>
    <recommendedName>
        <fullName evidence="2">Transaldolase</fullName>
        <ecNumber evidence="2">2.2.1.2</ecNumber>
    </recommendedName>
</protein>